<comment type="catalytic activity">
    <reaction evidence="1">
        <text>L-citrulline + L-aspartate + ATP = 2-(N(omega)-L-arginino)succinate + AMP + diphosphate + H(+)</text>
        <dbReference type="Rhea" id="RHEA:10932"/>
        <dbReference type="ChEBI" id="CHEBI:15378"/>
        <dbReference type="ChEBI" id="CHEBI:29991"/>
        <dbReference type="ChEBI" id="CHEBI:30616"/>
        <dbReference type="ChEBI" id="CHEBI:33019"/>
        <dbReference type="ChEBI" id="CHEBI:57472"/>
        <dbReference type="ChEBI" id="CHEBI:57743"/>
        <dbReference type="ChEBI" id="CHEBI:456215"/>
        <dbReference type="EC" id="6.3.4.5"/>
    </reaction>
</comment>
<comment type="pathway">
    <text evidence="1">Amino-acid biosynthesis; L-arginine biosynthesis; L-arginine from L-ornithine and carbamoyl phosphate: step 2/3.</text>
</comment>
<comment type="subunit">
    <text evidence="1">Homotetramer.</text>
</comment>
<comment type="subcellular location">
    <subcellularLocation>
        <location evidence="1">Cytoplasm</location>
    </subcellularLocation>
</comment>
<comment type="similarity">
    <text evidence="1">Belongs to the argininosuccinate synthase family. Type 1 subfamily.</text>
</comment>
<accession>Q5N1Z2</accession>
<keyword id="KW-0028">Amino-acid biosynthesis</keyword>
<keyword id="KW-0055">Arginine biosynthesis</keyword>
<keyword id="KW-0067">ATP-binding</keyword>
<keyword id="KW-0963">Cytoplasm</keyword>
<keyword id="KW-0436">Ligase</keyword>
<keyword id="KW-0547">Nucleotide-binding</keyword>
<protein>
    <recommendedName>
        <fullName evidence="1">Argininosuccinate synthase</fullName>
        <ecNumber evidence="1">6.3.4.5</ecNumber>
    </recommendedName>
    <alternativeName>
        <fullName evidence="1">Citrulline--aspartate ligase</fullName>
    </alternativeName>
</protein>
<gene>
    <name evidence="1" type="primary">argG</name>
    <name type="ordered locus">syc1488_c</name>
</gene>
<feature type="chain" id="PRO_0000148653" description="Argininosuccinate synthase">
    <location>
        <begin position="1"/>
        <end position="400"/>
    </location>
</feature>
<feature type="binding site" evidence="1">
    <location>
        <begin position="10"/>
        <end position="18"/>
    </location>
    <ligand>
        <name>ATP</name>
        <dbReference type="ChEBI" id="CHEBI:30616"/>
    </ligand>
</feature>
<feature type="binding site" evidence="1">
    <location>
        <position position="38"/>
    </location>
    <ligand>
        <name>ATP</name>
        <dbReference type="ChEBI" id="CHEBI:30616"/>
    </ligand>
</feature>
<feature type="binding site" evidence="1">
    <location>
        <position position="89"/>
    </location>
    <ligand>
        <name>L-citrulline</name>
        <dbReference type="ChEBI" id="CHEBI:57743"/>
    </ligand>
</feature>
<feature type="binding site" evidence="1">
    <location>
        <position position="119"/>
    </location>
    <ligand>
        <name>ATP</name>
        <dbReference type="ChEBI" id="CHEBI:30616"/>
    </ligand>
</feature>
<feature type="binding site" evidence="1">
    <location>
        <position position="121"/>
    </location>
    <ligand>
        <name>L-aspartate</name>
        <dbReference type="ChEBI" id="CHEBI:29991"/>
    </ligand>
</feature>
<feature type="binding site" evidence="1">
    <location>
        <position position="125"/>
    </location>
    <ligand>
        <name>L-aspartate</name>
        <dbReference type="ChEBI" id="CHEBI:29991"/>
    </ligand>
</feature>
<feature type="binding site" evidence="1">
    <location>
        <position position="125"/>
    </location>
    <ligand>
        <name>L-citrulline</name>
        <dbReference type="ChEBI" id="CHEBI:57743"/>
    </ligand>
</feature>
<feature type="binding site" evidence="1">
    <location>
        <position position="126"/>
    </location>
    <ligand>
        <name>L-aspartate</name>
        <dbReference type="ChEBI" id="CHEBI:29991"/>
    </ligand>
</feature>
<feature type="binding site" evidence="1">
    <location>
        <position position="129"/>
    </location>
    <ligand>
        <name>L-citrulline</name>
        <dbReference type="ChEBI" id="CHEBI:57743"/>
    </ligand>
</feature>
<feature type="binding site" evidence="1">
    <location>
        <position position="177"/>
    </location>
    <ligand>
        <name>L-citrulline</name>
        <dbReference type="ChEBI" id="CHEBI:57743"/>
    </ligand>
</feature>
<feature type="binding site" evidence="1">
    <location>
        <position position="186"/>
    </location>
    <ligand>
        <name>L-citrulline</name>
        <dbReference type="ChEBI" id="CHEBI:57743"/>
    </ligand>
</feature>
<feature type="binding site" evidence="1">
    <location>
        <position position="262"/>
    </location>
    <ligand>
        <name>L-citrulline</name>
        <dbReference type="ChEBI" id="CHEBI:57743"/>
    </ligand>
</feature>
<feature type="binding site" evidence="1">
    <location>
        <position position="274"/>
    </location>
    <ligand>
        <name>L-citrulline</name>
        <dbReference type="ChEBI" id="CHEBI:57743"/>
    </ligand>
</feature>
<name>ASSY_SYNP6</name>
<reference key="1">
    <citation type="journal article" date="2007" name="Photosyn. Res.">
        <title>Complete nucleotide sequence of the freshwater unicellular cyanobacterium Synechococcus elongatus PCC 6301 chromosome: gene content and organization.</title>
        <authorList>
            <person name="Sugita C."/>
            <person name="Ogata K."/>
            <person name="Shikata M."/>
            <person name="Jikuya H."/>
            <person name="Takano J."/>
            <person name="Furumichi M."/>
            <person name="Kanehisa M."/>
            <person name="Omata T."/>
            <person name="Sugiura M."/>
            <person name="Sugita M."/>
        </authorList>
    </citation>
    <scope>NUCLEOTIDE SEQUENCE [LARGE SCALE GENOMIC DNA]</scope>
    <source>
        <strain>ATCC 27144 / PCC 6301 / SAUG 1402/1</strain>
    </source>
</reference>
<organism>
    <name type="scientific">Synechococcus sp. (strain ATCC 27144 / PCC 6301 / SAUG 1402/1)</name>
    <name type="common">Anacystis nidulans</name>
    <dbReference type="NCBI Taxonomy" id="269084"/>
    <lineage>
        <taxon>Bacteria</taxon>
        <taxon>Bacillati</taxon>
        <taxon>Cyanobacteriota</taxon>
        <taxon>Cyanophyceae</taxon>
        <taxon>Synechococcales</taxon>
        <taxon>Synechococcaceae</taxon>
        <taxon>Synechococcus</taxon>
    </lineage>
</organism>
<dbReference type="EC" id="6.3.4.5" evidence="1"/>
<dbReference type="EMBL" id="AP008231">
    <property type="protein sequence ID" value="BAD79678.1"/>
    <property type="molecule type" value="Genomic_DNA"/>
</dbReference>
<dbReference type="RefSeq" id="WP_011243798.1">
    <property type="nucleotide sequence ID" value="NZ_CP085785.1"/>
</dbReference>
<dbReference type="SMR" id="Q5N1Z2"/>
<dbReference type="KEGG" id="syc:syc1488_c"/>
<dbReference type="eggNOG" id="COG0137">
    <property type="taxonomic scope" value="Bacteria"/>
</dbReference>
<dbReference type="UniPathway" id="UPA00068">
    <property type="reaction ID" value="UER00113"/>
</dbReference>
<dbReference type="Proteomes" id="UP000001175">
    <property type="component" value="Chromosome"/>
</dbReference>
<dbReference type="GO" id="GO:0005737">
    <property type="term" value="C:cytoplasm"/>
    <property type="evidence" value="ECO:0007669"/>
    <property type="project" value="UniProtKB-SubCell"/>
</dbReference>
<dbReference type="GO" id="GO:0004055">
    <property type="term" value="F:argininosuccinate synthase activity"/>
    <property type="evidence" value="ECO:0007669"/>
    <property type="project" value="UniProtKB-UniRule"/>
</dbReference>
<dbReference type="GO" id="GO:0005524">
    <property type="term" value="F:ATP binding"/>
    <property type="evidence" value="ECO:0007669"/>
    <property type="project" value="UniProtKB-UniRule"/>
</dbReference>
<dbReference type="GO" id="GO:0000053">
    <property type="term" value="P:argininosuccinate metabolic process"/>
    <property type="evidence" value="ECO:0007669"/>
    <property type="project" value="TreeGrafter"/>
</dbReference>
<dbReference type="GO" id="GO:0006526">
    <property type="term" value="P:L-arginine biosynthetic process"/>
    <property type="evidence" value="ECO:0007669"/>
    <property type="project" value="UniProtKB-UniRule"/>
</dbReference>
<dbReference type="GO" id="GO:0000050">
    <property type="term" value="P:urea cycle"/>
    <property type="evidence" value="ECO:0007669"/>
    <property type="project" value="TreeGrafter"/>
</dbReference>
<dbReference type="CDD" id="cd01999">
    <property type="entry name" value="ASS"/>
    <property type="match status" value="1"/>
</dbReference>
<dbReference type="FunFam" id="3.40.50.620:FF:000038">
    <property type="entry name" value="Argininosuccinate synthase"/>
    <property type="match status" value="1"/>
</dbReference>
<dbReference type="FunFam" id="3.90.1260.10:FF:000007">
    <property type="entry name" value="Argininosuccinate synthase"/>
    <property type="match status" value="1"/>
</dbReference>
<dbReference type="Gene3D" id="3.90.1260.10">
    <property type="entry name" value="Argininosuccinate synthetase, chain A, domain 2"/>
    <property type="match status" value="1"/>
</dbReference>
<dbReference type="Gene3D" id="3.40.50.620">
    <property type="entry name" value="HUPs"/>
    <property type="match status" value="1"/>
</dbReference>
<dbReference type="Gene3D" id="1.20.5.470">
    <property type="entry name" value="Single helix bin"/>
    <property type="match status" value="1"/>
</dbReference>
<dbReference type="HAMAP" id="MF_00005">
    <property type="entry name" value="Arg_succ_synth_type1"/>
    <property type="match status" value="1"/>
</dbReference>
<dbReference type="InterPro" id="IPR048268">
    <property type="entry name" value="Arginosuc_syn_C"/>
</dbReference>
<dbReference type="InterPro" id="IPR048267">
    <property type="entry name" value="Arginosuc_syn_N"/>
</dbReference>
<dbReference type="InterPro" id="IPR001518">
    <property type="entry name" value="Arginosuc_synth"/>
</dbReference>
<dbReference type="InterPro" id="IPR018223">
    <property type="entry name" value="Arginosuc_synth_CS"/>
</dbReference>
<dbReference type="InterPro" id="IPR023434">
    <property type="entry name" value="Arginosuc_synth_type_1_subfam"/>
</dbReference>
<dbReference type="InterPro" id="IPR024074">
    <property type="entry name" value="AS_cat/multimer_dom_body"/>
</dbReference>
<dbReference type="InterPro" id="IPR014729">
    <property type="entry name" value="Rossmann-like_a/b/a_fold"/>
</dbReference>
<dbReference type="NCBIfam" id="TIGR00032">
    <property type="entry name" value="argG"/>
    <property type="match status" value="1"/>
</dbReference>
<dbReference type="NCBIfam" id="NF001770">
    <property type="entry name" value="PRK00509.1"/>
    <property type="match status" value="1"/>
</dbReference>
<dbReference type="PANTHER" id="PTHR11587">
    <property type="entry name" value="ARGININOSUCCINATE SYNTHASE"/>
    <property type="match status" value="1"/>
</dbReference>
<dbReference type="PANTHER" id="PTHR11587:SF2">
    <property type="entry name" value="ARGININOSUCCINATE SYNTHASE"/>
    <property type="match status" value="1"/>
</dbReference>
<dbReference type="Pfam" id="PF20979">
    <property type="entry name" value="Arginosuc_syn_C"/>
    <property type="match status" value="1"/>
</dbReference>
<dbReference type="Pfam" id="PF00764">
    <property type="entry name" value="Arginosuc_synth"/>
    <property type="match status" value="1"/>
</dbReference>
<dbReference type="SUPFAM" id="SSF52402">
    <property type="entry name" value="Adenine nucleotide alpha hydrolases-like"/>
    <property type="match status" value="1"/>
</dbReference>
<dbReference type="SUPFAM" id="SSF69864">
    <property type="entry name" value="Argininosuccinate synthetase, C-terminal domain"/>
    <property type="match status" value="1"/>
</dbReference>
<dbReference type="PROSITE" id="PS00564">
    <property type="entry name" value="ARGININOSUCCIN_SYN_1"/>
    <property type="match status" value="1"/>
</dbReference>
<dbReference type="PROSITE" id="PS00565">
    <property type="entry name" value="ARGININOSUCCIN_SYN_2"/>
    <property type="match status" value="1"/>
</dbReference>
<evidence type="ECO:0000255" key="1">
    <source>
        <dbReference type="HAMAP-Rule" id="MF_00005"/>
    </source>
</evidence>
<sequence>MGRAKRVVLAYSGGVDTSVCIPYLKQEWGVEEVITLAADLGQGDELGPIRQKALDSGAVESLVIDATAEFVRDYAFPAIQANSLYEGRYPLSTALARPLIAKLLVEAAAKYGADAVAHGCTGKGNDQVRFDVSIAALNPDLKVLAPAREWGMSREETIAYGERFGIPAPVKKSSPYSIDRNLLGRSIEAGPLEDPLHEPLEEVYALTKAIANTPDEPAYIELGFDQGLPVTLNGQALAPVALIQQLNAIAGEHGIGRIDMIENRLVGIKSREIYETPALLVLIQAHQDLESLVLTADVSQYKRGIENSWSNLVYNGLWYSPLKAALDAFIQQTQQRVTGTVRLRLFKGNATVVGRSSEQSLYSPDMATYGAEDRFDHKAAEGFIYVWGMPTRIWSQTHRA</sequence>
<proteinExistence type="inferred from homology"/>